<protein>
    <recommendedName>
        <fullName evidence="1">Glycerol-3-phosphate acyltransferase</fullName>
        <shortName evidence="1">GPAT</shortName>
        <ecNumber evidence="1">2.3.1.15</ecNumber>
    </recommendedName>
</protein>
<name>PLSB_PSET1</name>
<comment type="catalytic activity">
    <reaction evidence="1">
        <text>sn-glycerol 3-phosphate + an acyl-CoA = a 1-acyl-sn-glycero-3-phosphate + CoA</text>
        <dbReference type="Rhea" id="RHEA:15325"/>
        <dbReference type="ChEBI" id="CHEBI:57287"/>
        <dbReference type="ChEBI" id="CHEBI:57597"/>
        <dbReference type="ChEBI" id="CHEBI:57970"/>
        <dbReference type="ChEBI" id="CHEBI:58342"/>
        <dbReference type="EC" id="2.3.1.15"/>
    </reaction>
</comment>
<comment type="pathway">
    <text evidence="1">Phospholipid metabolism; CDP-diacylglycerol biosynthesis; CDP-diacylglycerol from sn-glycerol 3-phosphate: step 1/3.</text>
</comment>
<comment type="subcellular location">
    <subcellularLocation>
        <location evidence="1">Cell inner membrane</location>
        <topology evidence="1">Peripheral membrane protein</topology>
        <orientation evidence="1">Cytoplasmic side</orientation>
    </subcellularLocation>
</comment>
<comment type="domain">
    <text evidence="1">The HXXXXD motif is essential for acyltransferase activity and may constitute the binding site for the phosphate moiety of the glycerol-3-phosphate.</text>
</comment>
<comment type="similarity">
    <text evidence="1">Belongs to the GPAT/DAPAT family.</text>
</comment>
<reference key="1">
    <citation type="journal article" date="2005" name="Genome Res.">
        <title>Coping with cold: the genome of the versatile marine Antarctica bacterium Pseudoalteromonas haloplanktis TAC125.</title>
        <authorList>
            <person name="Medigue C."/>
            <person name="Krin E."/>
            <person name="Pascal G."/>
            <person name="Barbe V."/>
            <person name="Bernsel A."/>
            <person name="Bertin P.N."/>
            <person name="Cheung F."/>
            <person name="Cruveiller S."/>
            <person name="D'Amico S."/>
            <person name="Duilio A."/>
            <person name="Fang G."/>
            <person name="Feller G."/>
            <person name="Ho C."/>
            <person name="Mangenot S."/>
            <person name="Marino G."/>
            <person name="Nilsson J."/>
            <person name="Parrilli E."/>
            <person name="Rocha E.P.C."/>
            <person name="Rouy Z."/>
            <person name="Sekowska A."/>
            <person name="Tutino M.L."/>
            <person name="Vallenet D."/>
            <person name="von Heijne G."/>
            <person name="Danchin A."/>
        </authorList>
    </citation>
    <scope>NUCLEOTIDE SEQUENCE [LARGE SCALE GENOMIC DNA]</scope>
    <source>
        <strain>TAC 125</strain>
    </source>
</reference>
<dbReference type="EC" id="2.3.1.15" evidence="1"/>
<dbReference type="EMBL" id="CR954246">
    <property type="protein sequence ID" value="CAI85246.1"/>
    <property type="molecule type" value="Genomic_DNA"/>
</dbReference>
<dbReference type="SMR" id="Q3IF27"/>
<dbReference type="STRING" id="326442.PSHAa0142"/>
<dbReference type="KEGG" id="pha:PSHAa0142"/>
<dbReference type="PATRIC" id="fig|326442.8.peg.136"/>
<dbReference type="eggNOG" id="COG2937">
    <property type="taxonomic scope" value="Bacteria"/>
</dbReference>
<dbReference type="HOGENOM" id="CLU_015407_0_0_6"/>
<dbReference type="BioCyc" id="PHAL326442:PSHA_RS00725-MONOMER"/>
<dbReference type="UniPathway" id="UPA00557">
    <property type="reaction ID" value="UER00612"/>
</dbReference>
<dbReference type="Proteomes" id="UP000006843">
    <property type="component" value="Chromosome I"/>
</dbReference>
<dbReference type="GO" id="GO:0005886">
    <property type="term" value="C:plasma membrane"/>
    <property type="evidence" value="ECO:0007669"/>
    <property type="project" value="UniProtKB-SubCell"/>
</dbReference>
<dbReference type="GO" id="GO:0004366">
    <property type="term" value="F:glycerol-3-phosphate O-acyltransferase activity"/>
    <property type="evidence" value="ECO:0007669"/>
    <property type="project" value="UniProtKB-UniRule"/>
</dbReference>
<dbReference type="GO" id="GO:0016024">
    <property type="term" value="P:CDP-diacylglycerol biosynthetic process"/>
    <property type="evidence" value="ECO:0007669"/>
    <property type="project" value="UniProtKB-UniRule"/>
</dbReference>
<dbReference type="GO" id="GO:0006631">
    <property type="term" value="P:fatty acid metabolic process"/>
    <property type="evidence" value="ECO:0007669"/>
    <property type="project" value="TreeGrafter"/>
</dbReference>
<dbReference type="CDD" id="cd07993">
    <property type="entry name" value="LPLAT_DHAPAT-like"/>
    <property type="match status" value="1"/>
</dbReference>
<dbReference type="HAMAP" id="MF_00393">
    <property type="entry name" value="Glyc3P_acyltrans"/>
    <property type="match status" value="1"/>
</dbReference>
<dbReference type="InterPro" id="IPR022284">
    <property type="entry name" value="GPAT/DHAPAT"/>
</dbReference>
<dbReference type="InterPro" id="IPR045520">
    <property type="entry name" value="GPAT/DHAPAT_C"/>
</dbReference>
<dbReference type="InterPro" id="IPR041728">
    <property type="entry name" value="GPAT/DHAPAT_LPLAT"/>
</dbReference>
<dbReference type="InterPro" id="IPR028354">
    <property type="entry name" value="GPAT_PlsB"/>
</dbReference>
<dbReference type="InterPro" id="IPR002123">
    <property type="entry name" value="Plipid/glycerol_acylTrfase"/>
</dbReference>
<dbReference type="NCBIfam" id="TIGR03703">
    <property type="entry name" value="plsB"/>
    <property type="match status" value="1"/>
</dbReference>
<dbReference type="NCBIfam" id="NF003441">
    <property type="entry name" value="PRK04974.1"/>
    <property type="match status" value="1"/>
</dbReference>
<dbReference type="PANTHER" id="PTHR12563:SF17">
    <property type="entry name" value="DIHYDROXYACETONE PHOSPHATE ACYLTRANSFERASE"/>
    <property type="match status" value="1"/>
</dbReference>
<dbReference type="PANTHER" id="PTHR12563">
    <property type="entry name" value="GLYCEROL-3-PHOSPHATE ACYLTRANSFERASE"/>
    <property type="match status" value="1"/>
</dbReference>
<dbReference type="Pfam" id="PF01553">
    <property type="entry name" value="Acyltransferase"/>
    <property type="match status" value="1"/>
</dbReference>
<dbReference type="Pfam" id="PF19277">
    <property type="entry name" value="GPAT_C"/>
    <property type="match status" value="1"/>
</dbReference>
<dbReference type="PIRSF" id="PIRSF500064">
    <property type="entry name" value="GPAT"/>
    <property type="match status" value="1"/>
</dbReference>
<dbReference type="PIRSF" id="PIRSF000437">
    <property type="entry name" value="GPAT_DHAPAT"/>
    <property type="match status" value="1"/>
</dbReference>
<dbReference type="SMART" id="SM00563">
    <property type="entry name" value="PlsC"/>
    <property type="match status" value="1"/>
</dbReference>
<dbReference type="SUPFAM" id="SSF69593">
    <property type="entry name" value="Glycerol-3-phosphate (1)-acyltransferase"/>
    <property type="match status" value="1"/>
</dbReference>
<organism>
    <name type="scientific">Pseudoalteromonas translucida (strain TAC 125)</name>
    <dbReference type="NCBI Taxonomy" id="326442"/>
    <lineage>
        <taxon>Bacteria</taxon>
        <taxon>Pseudomonadati</taxon>
        <taxon>Pseudomonadota</taxon>
        <taxon>Gammaproteobacteria</taxon>
        <taxon>Alteromonadales</taxon>
        <taxon>Pseudoalteromonadaceae</taxon>
        <taxon>Pseudoalteromonas</taxon>
    </lineage>
</organism>
<keyword id="KW-0012">Acyltransferase</keyword>
<keyword id="KW-0997">Cell inner membrane</keyword>
<keyword id="KW-1003">Cell membrane</keyword>
<keyword id="KW-0444">Lipid biosynthesis</keyword>
<keyword id="KW-0443">Lipid metabolism</keyword>
<keyword id="KW-0472">Membrane</keyword>
<keyword id="KW-0594">Phospholipid biosynthesis</keyword>
<keyword id="KW-1208">Phospholipid metabolism</keyword>
<keyword id="KW-1185">Reference proteome</keyword>
<keyword id="KW-0808">Transferase</keyword>
<proteinExistence type="inferred from homology"/>
<evidence type="ECO:0000255" key="1">
    <source>
        <dbReference type="HAMAP-Rule" id="MF_00393"/>
    </source>
</evidence>
<gene>
    <name evidence="1" type="primary">plsB</name>
    <name type="ordered locus">PSHAa0142</name>
</gene>
<accession>Q3IF27</accession>
<feature type="chain" id="PRO_1000049446" description="Glycerol-3-phosphate acyltransferase">
    <location>
        <begin position="1"/>
        <end position="812"/>
    </location>
</feature>
<feature type="short sequence motif" description="HXXXXD motif">
    <location>
        <begin position="308"/>
        <end position="313"/>
    </location>
</feature>
<sequence length="812" mass="92076">MRIVNYCLNVLSAGVSRLLVRSKVLPEKPTEQYELNSKNPTFYIVRLNSRFDLAALARVCKRHGLPDPREQQVLGTQRLDRFIGIENPPPLIGDIAKPTNALAQGKQIIDHLLSSGQKDVQVIPVTILWGRAPGKEKPGLSTLITHSLTPSWFRKLFVVLFSGRDNFIRFSQPLDLSLLVDEKADVNELPQKLLRVARVHFRRQKLAATGPKMPSREQLFNSLLASPTIKKAIQDEAKAKNISQAQARQNAVKLLNEIAANYSEAMIRVAERFLTWLWNKLYNGIDIKYTEQIHELTNKGHEIIYMPCHRSHMDYLLLTYAIYHQGLVPPHIAAGINLNFFPAGGIFRRSGAFFIRRSFAGNKLYSAVFKEYLSQLFIKGYSVKFYTEGGRSRTGRLLPPKTGMLAMTMQAMLRGIDRPISIVPVYIGYEHVMEINTYLKELAGNDKKGESIFGIFKAIKNLKNYGRGYLNFGDPISINQYLNDNQPNWRDDIHPTDVQKPQWLGPQVANLADQVMVKINNAAALNAVNLLAMILLVNDKHALSKPKLLAQLDFYLRLQRDASYSNKVTAPEETPEQLLTHALKLNKFDVISDEFGEIIAINDKEKTLFNYYRNNILHLFAVPSLIALHLFREKTTTVSKCQQLVAAFYPLFAKEWYLRELDEDYITRILANFVDQNLIELDGDNIHITNTNDCLAKLDMLGKALNFTLQRYAIVIGFIQTSNGIEKAELERESQVLAQRLGTLHGIKTPEFFDKKVLVSFIDNLRAQSLITDGDAGLIGSVQLCETYMHLKALLPARVWQSISDIVQGQCK</sequence>